<reference key="1">
    <citation type="submission" date="1997-06" db="EMBL/GenBank/DDBJ databases">
        <title>Partial cDNA nucleotide sequence of the zebrafish homolog of Mdm2.</title>
        <authorList>
            <person name="Neel H."/>
            <person name="Piette J."/>
        </authorList>
    </citation>
    <scope>NUCLEOTIDE SEQUENCE [MRNA]</scope>
</reference>
<reference key="2">
    <citation type="submission" date="2001-03" db="EMBL/GenBank/DDBJ databases">
        <title>A gene encoding MDM2-like protein from zebrafish.</title>
        <authorList>
            <person name="Lin Y.T."/>
            <person name="Chou C.M."/>
            <person name="Leu J.H."/>
            <person name="Tsai S.C."/>
            <person name="Huang C.J."/>
        </authorList>
    </citation>
    <scope>NUCLEOTIDE SEQUENCE [MRNA]</scope>
</reference>
<proteinExistence type="evidence at protein level"/>
<comment type="function">
    <text evidence="2">E3 ubiquitin-protein ligase that mediates ubiquitination of p53/TP53, leading to its degradation by the proteasome.</text>
</comment>
<comment type="catalytic activity">
    <reaction evidence="2">
        <text>S-ubiquitinyl-[E2 ubiquitin-conjugating enzyme]-L-cysteine + [acceptor protein]-L-lysine = [E2 ubiquitin-conjugating enzyme]-L-cysteine + N(6)-ubiquitinyl-[acceptor protein]-L-lysine.</text>
        <dbReference type="EC" id="2.3.2.27"/>
    </reaction>
</comment>
<comment type="subcellular location">
    <subcellularLocation>
        <location evidence="1">Nucleus</location>
        <location evidence="1">Nucleoplasm</location>
    </subcellularLocation>
    <subcellularLocation>
        <location evidence="1">Cytoplasm</location>
    </subcellularLocation>
    <subcellularLocation>
        <location evidence="1">Nucleus</location>
        <location evidence="1">Nucleolus</location>
    </subcellularLocation>
    <subcellularLocation>
        <location evidence="2">Nucleus</location>
    </subcellularLocation>
</comment>
<comment type="similarity">
    <text evidence="8">Belongs to the MDM2/MDM4 family.</text>
</comment>
<dbReference type="EC" id="2.3.2.27"/>
<dbReference type="EMBL" id="AF010255">
    <property type="protein sequence ID" value="AAB64176.1"/>
    <property type="molecule type" value="mRNA"/>
</dbReference>
<dbReference type="EMBL" id="AF356346">
    <property type="protein sequence ID" value="AAM00198.1"/>
    <property type="molecule type" value="mRNA"/>
</dbReference>
<dbReference type="PDB" id="7AH2">
    <property type="method" value="X-ray"/>
    <property type="resolution" value="2.87 A"/>
    <property type="chains" value="AAA/BBB=377-445"/>
</dbReference>
<dbReference type="PDBsum" id="7AH2"/>
<dbReference type="SMR" id="O42354"/>
<dbReference type="FunCoup" id="O42354">
    <property type="interactions" value="1232"/>
</dbReference>
<dbReference type="STRING" id="7955.ENSDARP00000072320"/>
<dbReference type="PaxDb" id="7955-ENSDARP00000108555"/>
<dbReference type="AGR" id="ZFIN:ZDB-GENE-990415-153"/>
<dbReference type="ZFIN" id="ZDB-GENE-990415-153">
    <property type="gene designation" value="mdm2"/>
</dbReference>
<dbReference type="eggNOG" id="ENOG502QQNV">
    <property type="taxonomic scope" value="Eukaryota"/>
</dbReference>
<dbReference type="InParanoid" id="O42354"/>
<dbReference type="Reactome" id="R-DRE-198323">
    <property type="pathway name" value="AKT phosphorylates targets in the cytosol"/>
</dbReference>
<dbReference type="Reactome" id="R-DRE-2559580">
    <property type="pathway name" value="Oxidative Stress Induced Senescence"/>
</dbReference>
<dbReference type="Reactome" id="R-DRE-2559585">
    <property type="pathway name" value="Oncogene Induced Senescence"/>
</dbReference>
<dbReference type="Reactome" id="R-DRE-3232142">
    <property type="pathway name" value="SUMOylation of ubiquitinylation proteins"/>
</dbReference>
<dbReference type="Reactome" id="R-DRE-6804757">
    <property type="pathway name" value="Regulation of TP53 Degradation"/>
</dbReference>
<dbReference type="Reactome" id="R-DRE-69541">
    <property type="pathway name" value="Stabilization of p53"/>
</dbReference>
<dbReference type="Reactome" id="R-DRE-8941858">
    <property type="pathway name" value="Regulation of RUNX3 expression and activity"/>
</dbReference>
<dbReference type="PRO" id="PR:O42354"/>
<dbReference type="Proteomes" id="UP000000437">
    <property type="component" value="Unplaced"/>
</dbReference>
<dbReference type="GO" id="GO:0005737">
    <property type="term" value="C:cytoplasm"/>
    <property type="evidence" value="ECO:0000250"/>
    <property type="project" value="UniProtKB"/>
</dbReference>
<dbReference type="GO" id="GO:0005730">
    <property type="term" value="C:nucleolus"/>
    <property type="evidence" value="ECO:0007669"/>
    <property type="project" value="UniProtKB-SubCell"/>
</dbReference>
<dbReference type="GO" id="GO:0005654">
    <property type="term" value="C:nucleoplasm"/>
    <property type="evidence" value="ECO:0007669"/>
    <property type="project" value="UniProtKB-SubCell"/>
</dbReference>
<dbReference type="GO" id="GO:0005634">
    <property type="term" value="C:nucleus"/>
    <property type="evidence" value="ECO:0000250"/>
    <property type="project" value="UniProtKB"/>
</dbReference>
<dbReference type="GO" id="GO:0042802">
    <property type="term" value="F:identical protein binding"/>
    <property type="evidence" value="ECO:0007669"/>
    <property type="project" value="InterPro"/>
</dbReference>
<dbReference type="GO" id="GO:0061630">
    <property type="term" value="F:ubiquitin protein ligase activity"/>
    <property type="evidence" value="ECO:0000318"/>
    <property type="project" value="GO_Central"/>
</dbReference>
<dbReference type="GO" id="GO:0008270">
    <property type="term" value="F:zinc ion binding"/>
    <property type="evidence" value="ECO:0007669"/>
    <property type="project" value="UniProtKB-KW"/>
</dbReference>
<dbReference type="GO" id="GO:0006915">
    <property type="term" value="P:apoptotic process"/>
    <property type="evidence" value="ECO:0000250"/>
    <property type="project" value="UniProtKB"/>
</dbReference>
<dbReference type="GO" id="GO:0043066">
    <property type="term" value="P:negative regulation of apoptotic process"/>
    <property type="evidence" value="ECO:0000315"/>
    <property type="project" value="ZFIN"/>
</dbReference>
<dbReference type="GO" id="GO:1904036">
    <property type="term" value="P:negative regulation of epithelial cell apoptotic process"/>
    <property type="evidence" value="ECO:0000315"/>
    <property type="project" value="ZFIN"/>
</dbReference>
<dbReference type="GO" id="GO:1902254">
    <property type="term" value="P:negative regulation of intrinsic apoptotic signaling pathway by p53 class mediator"/>
    <property type="evidence" value="ECO:0000316"/>
    <property type="project" value="ZFIN"/>
</dbReference>
<dbReference type="GO" id="GO:0045931">
    <property type="term" value="P:positive regulation of mitotic cell cycle"/>
    <property type="evidence" value="ECO:0000318"/>
    <property type="project" value="GO_Central"/>
</dbReference>
<dbReference type="GO" id="GO:0035775">
    <property type="term" value="P:pronephric glomerulus morphogenesis"/>
    <property type="evidence" value="ECO:0000315"/>
    <property type="project" value="ZFIN"/>
</dbReference>
<dbReference type="GO" id="GO:0051726">
    <property type="term" value="P:regulation of cell cycle"/>
    <property type="evidence" value="ECO:0000315"/>
    <property type="project" value="ZFIN"/>
</dbReference>
<dbReference type="GO" id="GO:0031647">
    <property type="term" value="P:regulation of protein stability"/>
    <property type="evidence" value="ECO:0000316"/>
    <property type="project" value="ZFIN"/>
</dbReference>
<dbReference type="GO" id="GO:0010165">
    <property type="term" value="P:response to X-ray"/>
    <property type="evidence" value="ECO:0000316"/>
    <property type="project" value="ZFIN"/>
</dbReference>
<dbReference type="GO" id="GO:0006511">
    <property type="term" value="P:ubiquitin-dependent protein catabolic process"/>
    <property type="evidence" value="ECO:0000318"/>
    <property type="project" value="GO_Central"/>
</dbReference>
<dbReference type="CDD" id="cd17672">
    <property type="entry name" value="MDM2"/>
    <property type="match status" value="1"/>
</dbReference>
<dbReference type="CDD" id="cd16783">
    <property type="entry name" value="mRING-HC-C2H2C4_MDM2"/>
    <property type="match status" value="1"/>
</dbReference>
<dbReference type="Gene3D" id="1.10.245.10">
    <property type="entry name" value="SWIB/MDM2 domain"/>
    <property type="match status" value="1"/>
</dbReference>
<dbReference type="Gene3D" id="3.30.40.10">
    <property type="entry name" value="Zinc/RING finger domain, C3HC4 (zinc finger)"/>
    <property type="match status" value="1"/>
</dbReference>
<dbReference type="Gene3D" id="2.30.30.380">
    <property type="entry name" value="Zn-finger domain of Sec23/24"/>
    <property type="match status" value="1"/>
</dbReference>
<dbReference type="InterPro" id="IPR028340">
    <property type="entry name" value="Mdm2"/>
</dbReference>
<dbReference type="InterPro" id="IPR044080">
    <property type="entry name" value="MDM2_mRING-HC-C2H2C4"/>
</dbReference>
<dbReference type="InterPro" id="IPR016495">
    <property type="entry name" value="p53_neg-reg_MDM_2/4"/>
</dbReference>
<dbReference type="InterPro" id="IPR036885">
    <property type="entry name" value="SWIB_MDM2_dom_sf"/>
</dbReference>
<dbReference type="InterPro" id="IPR003121">
    <property type="entry name" value="SWIB_MDM2_domain"/>
</dbReference>
<dbReference type="InterPro" id="IPR001876">
    <property type="entry name" value="Znf_RanBP2"/>
</dbReference>
<dbReference type="InterPro" id="IPR036443">
    <property type="entry name" value="Znf_RanBP2_sf"/>
</dbReference>
<dbReference type="InterPro" id="IPR001841">
    <property type="entry name" value="Znf_RING"/>
</dbReference>
<dbReference type="InterPro" id="IPR013083">
    <property type="entry name" value="Znf_RING/FYVE/PHD"/>
</dbReference>
<dbReference type="PANTHER" id="PTHR46858:SF13">
    <property type="entry name" value="E3 UBIQUITIN-PROTEIN LIGASE MDM2"/>
    <property type="match status" value="1"/>
</dbReference>
<dbReference type="PANTHER" id="PTHR46858">
    <property type="entry name" value="OS05G0521000 PROTEIN"/>
    <property type="match status" value="1"/>
</dbReference>
<dbReference type="Pfam" id="PF02201">
    <property type="entry name" value="SWIB"/>
    <property type="match status" value="1"/>
</dbReference>
<dbReference type="Pfam" id="PF13920">
    <property type="entry name" value="zf-C3HC4_3"/>
    <property type="match status" value="1"/>
</dbReference>
<dbReference type="PIRSF" id="PIRSF500700">
    <property type="entry name" value="MDM2"/>
    <property type="match status" value="1"/>
</dbReference>
<dbReference type="PIRSF" id="PIRSF006748">
    <property type="entry name" value="p53_MDM_2/4"/>
    <property type="match status" value="1"/>
</dbReference>
<dbReference type="SUPFAM" id="SSF90209">
    <property type="entry name" value="Ran binding protein zinc finger-like"/>
    <property type="match status" value="1"/>
</dbReference>
<dbReference type="SUPFAM" id="SSF57850">
    <property type="entry name" value="RING/U-box"/>
    <property type="match status" value="1"/>
</dbReference>
<dbReference type="SUPFAM" id="SSF47592">
    <property type="entry name" value="SWIB/MDM2 domain"/>
    <property type="match status" value="1"/>
</dbReference>
<dbReference type="PROSITE" id="PS51925">
    <property type="entry name" value="SWIB_MDM2"/>
    <property type="match status" value="1"/>
</dbReference>
<dbReference type="PROSITE" id="PS01358">
    <property type="entry name" value="ZF_RANBP2_1"/>
    <property type="match status" value="1"/>
</dbReference>
<dbReference type="PROSITE" id="PS50199">
    <property type="entry name" value="ZF_RANBP2_2"/>
    <property type="match status" value="1"/>
</dbReference>
<dbReference type="PROSITE" id="PS50089">
    <property type="entry name" value="ZF_RING_2"/>
    <property type="match status" value="1"/>
</dbReference>
<organism>
    <name type="scientific">Danio rerio</name>
    <name type="common">Zebrafish</name>
    <name type="synonym">Brachydanio rerio</name>
    <dbReference type="NCBI Taxonomy" id="7955"/>
    <lineage>
        <taxon>Eukaryota</taxon>
        <taxon>Metazoa</taxon>
        <taxon>Chordata</taxon>
        <taxon>Craniata</taxon>
        <taxon>Vertebrata</taxon>
        <taxon>Euteleostomi</taxon>
        <taxon>Actinopterygii</taxon>
        <taxon>Neopterygii</taxon>
        <taxon>Teleostei</taxon>
        <taxon>Ostariophysi</taxon>
        <taxon>Cypriniformes</taxon>
        <taxon>Danionidae</taxon>
        <taxon>Danioninae</taxon>
        <taxon>Danio</taxon>
    </lineage>
</organism>
<name>MDM2_DANRE</name>
<sequence length="445" mass="49950">MATESCLSSSQISKVDNEKLVRPKVQLKSLLEDAGADKDVFTMKEVMFYLGKYIMSKELYDKQQQHIVHCGEDPLGAVLGVKSFSVKEPRALFALINRNLVTVKNPESQSTFSEPRSQSEPDRGPGDTDSDSRSSTSQQQRRRRRSSDPESSSAEDESRERRKRHKSDSFSLTFDDSLSWCVIGGLHRERGNSESSDANSNSDVGISRSEGSEESEDSDSDSDNFSVEFEVESINSDAYSENDVDSVPGENEIYEVTIFAEDEDSFDEDTEITEADYWKCPKCDQFNPPLPRHCKSCWTVRADWLPETHSNWENLSRNTRTNPEDTSVTTTPNTTFEKKLSKPSSPLPETDDGVDVPTPPLLRRGSSQEETPELERFNSLEACLPATCLEPCVICQSRPKNGCIVHGRTGHLMACYTCAKKLKNRNKLCPVCREPIQSVVLTYMS</sequence>
<evidence type="ECO:0000250" key="1">
    <source>
        <dbReference type="UniProtKB" id="P23804"/>
    </source>
</evidence>
<evidence type="ECO:0000250" key="2">
    <source>
        <dbReference type="UniProtKB" id="Q00987"/>
    </source>
</evidence>
<evidence type="ECO:0000255" key="3"/>
<evidence type="ECO:0000255" key="4">
    <source>
        <dbReference type="PROSITE-ProRule" id="PRU00175"/>
    </source>
</evidence>
<evidence type="ECO:0000255" key="5">
    <source>
        <dbReference type="PROSITE-ProRule" id="PRU00322"/>
    </source>
</evidence>
<evidence type="ECO:0000255" key="6">
    <source>
        <dbReference type="PROSITE-ProRule" id="PRU01273"/>
    </source>
</evidence>
<evidence type="ECO:0000256" key="7">
    <source>
        <dbReference type="SAM" id="MobiDB-lite"/>
    </source>
</evidence>
<evidence type="ECO:0000305" key="8"/>
<accession>O42354</accession>
<gene>
    <name type="primary">mdm2</name>
</gene>
<protein>
    <recommendedName>
        <fullName>E3 ubiquitin-protein ligase Mdm2</fullName>
        <ecNumber>2.3.2.27</ecNumber>
    </recommendedName>
    <alternativeName>
        <fullName>Double minute 2 protein</fullName>
    </alternativeName>
    <alternativeName>
        <fullName evidence="8">RING-type E3 ubiquitin transferase Mdm2</fullName>
    </alternativeName>
    <alternativeName>
        <fullName>p53-binding protein Mdm2</fullName>
    </alternativeName>
</protein>
<keyword id="KW-0002">3D-structure</keyword>
<keyword id="KW-0963">Cytoplasm</keyword>
<keyword id="KW-0479">Metal-binding</keyword>
<keyword id="KW-0539">Nucleus</keyword>
<keyword id="KW-1185">Reference proteome</keyword>
<keyword id="KW-0808">Transferase</keyword>
<keyword id="KW-0833">Ubl conjugation pathway</keyword>
<keyword id="KW-0862">Zinc</keyword>
<keyword id="KW-0863">Zinc-finger</keyword>
<feature type="chain" id="PRO_0000157335" description="E3 ubiquitin-protein ligase Mdm2">
    <location>
        <begin position="1"/>
        <end position="445"/>
    </location>
</feature>
<feature type="domain" description="SWIB/MDM2" evidence="6">
    <location>
        <begin position="19"/>
        <end position="102"/>
    </location>
</feature>
<feature type="zinc finger region" description="RanBP2-type" evidence="5">
    <location>
        <begin position="274"/>
        <end position="303"/>
    </location>
</feature>
<feature type="zinc finger region" description="RING-type" evidence="4">
    <location>
        <begin position="392"/>
        <end position="433"/>
    </location>
</feature>
<feature type="region of interest" description="Disordered" evidence="7">
    <location>
        <begin position="106"/>
        <end position="168"/>
    </location>
</feature>
<feature type="region of interest" description="Disordered" evidence="7">
    <location>
        <begin position="188"/>
        <end position="224"/>
    </location>
</feature>
<feature type="region of interest" description="ARF-binding">
    <location>
        <begin position="190"/>
        <end position="279"/>
    </location>
</feature>
<feature type="region of interest" description="Region II">
    <location>
        <begin position="222"/>
        <end position="306"/>
    </location>
</feature>
<feature type="region of interest" description="Disordered" evidence="7">
    <location>
        <begin position="313"/>
        <end position="372"/>
    </location>
</feature>
<feature type="short sequence motif" description="Nuclear localization signal" evidence="3">
    <location>
        <begin position="160"/>
        <end position="166"/>
    </location>
</feature>
<feature type="short sequence motif" description="Nuclear export signal">
    <location>
        <begin position="171"/>
        <end position="183"/>
    </location>
</feature>
<feature type="short sequence motif" description="Nucleolar localization signal" evidence="3">
    <location>
        <begin position="420"/>
        <end position="427"/>
    </location>
</feature>
<feature type="compositionally biased region" description="Polar residues" evidence="7">
    <location>
        <begin position="106"/>
        <end position="116"/>
    </location>
</feature>
<feature type="compositionally biased region" description="Basic and acidic residues" evidence="7">
    <location>
        <begin position="117"/>
        <end position="132"/>
    </location>
</feature>
<feature type="compositionally biased region" description="Low complexity" evidence="7">
    <location>
        <begin position="193"/>
        <end position="209"/>
    </location>
</feature>
<feature type="compositionally biased region" description="Acidic residues" evidence="7">
    <location>
        <begin position="212"/>
        <end position="222"/>
    </location>
</feature>
<feature type="compositionally biased region" description="Polar residues" evidence="7">
    <location>
        <begin position="313"/>
        <end position="335"/>
    </location>
</feature>